<evidence type="ECO:0000269" key="1">
    <source>
    </source>
</evidence>
<evidence type="ECO:0000303" key="2">
    <source>
    </source>
</evidence>
<reference key="1">
    <citation type="journal article" date="2009" name="ChemBioChem">
        <title>Evolution of nacre: biochemistry and 'shellomics' of the shell organic matrix of the cephalopod Nautilus macromphalus.</title>
        <authorList>
            <person name="Marie B."/>
            <person name="Marin F."/>
            <person name="Marie A."/>
            <person name="Bedouet L."/>
            <person name="Dubost L."/>
            <person name="Alcaraz G."/>
            <person name="Milet C."/>
            <person name="Luquet G."/>
        </authorList>
    </citation>
    <scope>PROTEIN SEQUENCE</scope>
    <scope>TISSUE SPECIFICITY</scope>
    <source>
        <tissue>Shell</tissue>
    </source>
</reference>
<protein>
    <recommendedName>
        <fullName evidence="2">Uncharacterized protein SMPP6</fullName>
    </recommendedName>
</protein>
<accession>P85373</accession>
<comment type="tissue specificity">
    <text evidence="1">Nacreous layer of shell.</text>
</comment>
<organism>
    <name type="scientific">Nautilus macromphalus</name>
    <name type="common">Bellybutton nautilus</name>
    <dbReference type="NCBI Taxonomy" id="34576"/>
    <lineage>
        <taxon>Eukaryota</taxon>
        <taxon>Metazoa</taxon>
        <taxon>Spiralia</taxon>
        <taxon>Lophotrochozoa</taxon>
        <taxon>Mollusca</taxon>
        <taxon>Cephalopoda</taxon>
        <taxon>Nautiloidea</taxon>
        <taxon>Nautilida</taxon>
        <taxon>Nautilidae</taxon>
        <taxon>Nautilus</taxon>
    </lineage>
</organism>
<keyword id="KW-0903">Direct protein sequencing</keyword>
<name>SMP06_NAUMA</name>
<feature type="chain" id="PRO_0000371487" description="Uncharacterized protein SMPP6">
    <location>
        <begin position="1" status="less than"/>
        <end position="6" status="greater than"/>
    </location>
</feature>
<feature type="unsure residue" description="L or I" evidence="1">
    <location>
        <position position="3"/>
    </location>
</feature>
<feature type="unsure residue" description="L or I" evidence="1">
    <location>
        <position position="5"/>
    </location>
</feature>
<feature type="non-terminal residue" evidence="2">
    <location>
        <position position="1"/>
    </location>
</feature>
<feature type="non-terminal residue" evidence="2">
    <location>
        <position position="6"/>
    </location>
</feature>
<sequence>ADLFLR</sequence>
<proteinExistence type="evidence at protein level"/>